<sequence>MPPLEDTIAALATPAGISALAILRASGPDTRRIAEAILGRTPLPRRIQRVDYRDRAGHILDEVLCVFFPQPRSYTGEDLLEISTHGNPFIAQRVLQDLFARGCRPAGPGEFTQRAFLNGRLDLSQAEAVMDLIHAQSDRALAAANHQLRGSLGRHVQRIIDRVVRVLAQVEAYIDFPDEDLPSSNRDTLAAELEMARHEAEQLIATQRYGNLIRDGIKTVIVGAPNVGKSSLLNRLVGRERALVSAEPGTTRDFIEERIAVGEHCIRLVDTAGLNVSPAPLEALGIHKSLEQLADADLVLAIVDLSDPEPSLPPELAKRLDPKNTLLVANKIDLCAGKCVLDTVDQWFGMVFCSAKIGVGLDDLFGAIGRWADQWQITVGQDVIAVNARHSHALALALEALDAALDKLRSGDAAELLASDLRSALLALGDIAGRVDNERVLDELFATFCIGK</sequence>
<gene>
    <name evidence="1" type="primary">mnmE</name>
    <name evidence="1" type="synonym">trmE</name>
    <name type="ordered locus">Oter_0884</name>
</gene>
<keyword id="KW-0963">Cytoplasm</keyword>
<keyword id="KW-0342">GTP-binding</keyword>
<keyword id="KW-0378">Hydrolase</keyword>
<keyword id="KW-0460">Magnesium</keyword>
<keyword id="KW-0479">Metal-binding</keyword>
<keyword id="KW-0547">Nucleotide-binding</keyword>
<keyword id="KW-0630">Potassium</keyword>
<keyword id="KW-1185">Reference proteome</keyword>
<keyword id="KW-0819">tRNA processing</keyword>
<protein>
    <recommendedName>
        <fullName evidence="1">tRNA modification GTPase MnmE</fullName>
        <ecNumber evidence="1">3.6.-.-</ecNumber>
    </recommendedName>
</protein>
<evidence type="ECO:0000255" key="1">
    <source>
        <dbReference type="HAMAP-Rule" id="MF_00379"/>
    </source>
</evidence>
<proteinExistence type="inferred from homology"/>
<accession>B1ZWP5</accession>
<comment type="function">
    <text evidence="1">Exhibits a very high intrinsic GTPase hydrolysis rate. Involved in the addition of a carboxymethylaminomethyl (cmnm) group at the wobble position (U34) of certain tRNAs, forming tRNA-cmnm(5)s(2)U34.</text>
</comment>
<comment type="cofactor">
    <cofactor evidence="1">
        <name>K(+)</name>
        <dbReference type="ChEBI" id="CHEBI:29103"/>
    </cofactor>
    <text evidence="1">Binds 1 potassium ion per subunit.</text>
</comment>
<comment type="subunit">
    <text evidence="1">Homodimer. Heterotetramer of two MnmE and two MnmG subunits.</text>
</comment>
<comment type="subcellular location">
    <subcellularLocation>
        <location evidence="1">Cytoplasm</location>
    </subcellularLocation>
</comment>
<comment type="similarity">
    <text evidence="1">Belongs to the TRAFAC class TrmE-Era-EngA-EngB-Septin-like GTPase superfamily. TrmE GTPase family.</text>
</comment>
<dbReference type="EC" id="3.6.-.-" evidence="1"/>
<dbReference type="EMBL" id="CP001032">
    <property type="protein sequence ID" value="ACB74172.1"/>
    <property type="molecule type" value="Genomic_DNA"/>
</dbReference>
<dbReference type="RefSeq" id="WP_012373710.1">
    <property type="nucleotide sequence ID" value="NC_010571.1"/>
</dbReference>
<dbReference type="SMR" id="B1ZWP5"/>
<dbReference type="STRING" id="452637.Oter_0884"/>
<dbReference type="KEGG" id="ote:Oter_0884"/>
<dbReference type="eggNOG" id="COG0486">
    <property type="taxonomic scope" value="Bacteria"/>
</dbReference>
<dbReference type="HOGENOM" id="CLU_019624_4_1_0"/>
<dbReference type="OrthoDB" id="9805918at2"/>
<dbReference type="Proteomes" id="UP000007013">
    <property type="component" value="Chromosome"/>
</dbReference>
<dbReference type="GO" id="GO:0005829">
    <property type="term" value="C:cytosol"/>
    <property type="evidence" value="ECO:0007669"/>
    <property type="project" value="TreeGrafter"/>
</dbReference>
<dbReference type="GO" id="GO:0005525">
    <property type="term" value="F:GTP binding"/>
    <property type="evidence" value="ECO:0007669"/>
    <property type="project" value="UniProtKB-UniRule"/>
</dbReference>
<dbReference type="GO" id="GO:0003924">
    <property type="term" value="F:GTPase activity"/>
    <property type="evidence" value="ECO:0007669"/>
    <property type="project" value="UniProtKB-UniRule"/>
</dbReference>
<dbReference type="GO" id="GO:0046872">
    <property type="term" value="F:metal ion binding"/>
    <property type="evidence" value="ECO:0007669"/>
    <property type="project" value="UniProtKB-KW"/>
</dbReference>
<dbReference type="GO" id="GO:0030488">
    <property type="term" value="P:tRNA methylation"/>
    <property type="evidence" value="ECO:0007669"/>
    <property type="project" value="TreeGrafter"/>
</dbReference>
<dbReference type="GO" id="GO:0002098">
    <property type="term" value="P:tRNA wobble uridine modification"/>
    <property type="evidence" value="ECO:0007669"/>
    <property type="project" value="TreeGrafter"/>
</dbReference>
<dbReference type="CDD" id="cd04164">
    <property type="entry name" value="trmE"/>
    <property type="match status" value="1"/>
</dbReference>
<dbReference type="CDD" id="cd14858">
    <property type="entry name" value="TrmE_N"/>
    <property type="match status" value="1"/>
</dbReference>
<dbReference type="Gene3D" id="3.40.50.300">
    <property type="entry name" value="P-loop containing nucleotide triphosphate hydrolases"/>
    <property type="match status" value="1"/>
</dbReference>
<dbReference type="Gene3D" id="3.30.1360.120">
    <property type="entry name" value="Probable tRNA modification gtpase trme, domain 1"/>
    <property type="match status" value="1"/>
</dbReference>
<dbReference type="Gene3D" id="1.20.120.430">
    <property type="entry name" value="tRNA modification GTPase MnmE domain 2"/>
    <property type="match status" value="1"/>
</dbReference>
<dbReference type="HAMAP" id="MF_00379">
    <property type="entry name" value="GTPase_MnmE"/>
    <property type="match status" value="1"/>
</dbReference>
<dbReference type="InterPro" id="IPR031168">
    <property type="entry name" value="G_TrmE"/>
</dbReference>
<dbReference type="InterPro" id="IPR006073">
    <property type="entry name" value="GTP-bd"/>
</dbReference>
<dbReference type="InterPro" id="IPR018948">
    <property type="entry name" value="GTP-bd_TrmE_N"/>
</dbReference>
<dbReference type="InterPro" id="IPR004520">
    <property type="entry name" value="GTPase_MnmE"/>
</dbReference>
<dbReference type="InterPro" id="IPR027368">
    <property type="entry name" value="MnmE_dom2"/>
</dbReference>
<dbReference type="InterPro" id="IPR025867">
    <property type="entry name" value="MnmE_helical"/>
</dbReference>
<dbReference type="InterPro" id="IPR027417">
    <property type="entry name" value="P-loop_NTPase"/>
</dbReference>
<dbReference type="InterPro" id="IPR005225">
    <property type="entry name" value="Small_GTP-bd"/>
</dbReference>
<dbReference type="InterPro" id="IPR027266">
    <property type="entry name" value="TrmE/GcvT_dom1"/>
</dbReference>
<dbReference type="NCBIfam" id="TIGR00450">
    <property type="entry name" value="mnmE_trmE_thdF"/>
    <property type="match status" value="1"/>
</dbReference>
<dbReference type="NCBIfam" id="NF003661">
    <property type="entry name" value="PRK05291.1-3"/>
    <property type="match status" value="1"/>
</dbReference>
<dbReference type="NCBIfam" id="TIGR00231">
    <property type="entry name" value="small_GTP"/>
    <property type="match status" value="1"/>
</dbReference>
<dbReference type="PANTHER" id="PTHR42714">
    <property type="entry name" value="TRNA MODIFICATION GTPASE GTPBP3"/>
    <property type="match status" value="1"/>
</dbReference>
<dbReference type="PANTHER" id="PTHR42714:SF2">
    <property type="entry name" value="TRNA MODIFICATION GTPASE GTPBP3, MITOCHONDRIAL"/>
    <property type="match status" value="1"/>
</dbReference>
<dbReference type="Pfam" id="PF01926">
    <property type="entry name" value="MMR_HSR1"/>
    <property type="match status" value="1"/>
</dbReference>
<dbReference type="Pfam" id="PF12631">
    <property type="entry name" value="MnmE_helical"/>
    <property type="match status" value="1"/>
</dbReference>
<dbReference type="Pfam" id="PF10396">
    <property type="entry name" value="TrmE_N"/>
    <property type="match status" value="1"/>
</dbReference>
<dbReference type="PRINTS" id="PR00449">
    <property type="entry name" value="RASTRNSFRMNG"/>
</dbReference>
<dbReference type="SUPFAM" id="SSF52540">
    <property type="entry name" value="P-loop containing nucleoside triphosphate hydrolases"/>
    <property type="match status" value="1"/>
</dbReference>
<dbReference type="SUPFAM" id="SSF116878">
    <property type="entry name" value="TrmE connector domain"/>
    <property type="match status" value="1"/>
</dbReference>
<dbReference type="PROSITE" id="PS51709">
    <property type="entry name" value="G_TRME"/>
    <property type="match status" value="1"/>
</dbReference>
<name>MNME_OPITP</name>
<reference key="1">
    <citation type="journal article" date="2011" name="J. Bacteriol.">
        <title>Genome sequence of the verrucomicrobium Opitutus terrae PB90-1, an abundant inhabitant of rice paddy soil ecosystems.</title>
        <authorList>
            <person name="van Passel M.W."/>
            <person name="Kant R."/>
            <person name="Palva A."/>
            <person name="Copeland A."/>
            <person name="Lucas S."/>
            <person name="Lapidus A."/>
            <person name="Glavina del Rio T."/>
            <person name="Pitluck S."/>
            <person name="Goltsman E."/>
            <person name="Clum A."/>
            <person name="Sun H."/>
            <person name="Schmutz J."/>
            <person name="Larimer F.W."/>
            <person name="Land M.L."/>
            <person name="Hauser L."/>
            <person name="Kyrpides N."/>
            <person name="Mikhailova N."/>
            <person name="Richardson P.P."/>
            <person name="Janssen P.H."/>
            <person name="de Vos W.M."/>
            <person name="Smidt H."/>
        </authorList>
    </citation>
    <scope>NUCLEOTIDE SEQUENCE [LARGE SCALE GENOMIC DNA]</scope>
    <source>
        <strain>DSM 11246 / JCM 15787 / PB90-1</strain>
    </source>
</reference>
<feature type="chain" id="PRO_0000345858" description="tRNA modification GTPase MnmE">
    <location>
        <begin position="1"/>
        <end position="452"/>
    </location>
</feature>
<feature type="domain" description="TrmE-type G">
    <location>
        <begin position="216"/>
        <end position="373"/>
    </location>
</feature>
<feature type="binding site" evidence="1">
    <location>
        <position position="24"/>
    </location>
    <ligand>
        <name>(6S)-5-formyl-5,6,7,8-tetrahydrofolate</name>
        <dbReference type="ChEBI" id="CHEBI:57457"/>
    </ligand>
</feature>
<feature type="binding site" evidence="1">
    <location>
        <position position="81"/>
    </location>
    <ligand>
        <name>(6S)-5-formyl-5,6,7,8-tetrahydrofolate</name>
        <dbReference type="ChEBI" id="CHEBI:57457"/>
    </ligand>
</feature>
<feature type="binding site" evidence="1">
    <location>
        <position position="120"/>
    </location>
    <ligand>
        <name>(6S)-5-formyl-5,6,7,8-tetrahydrofolate</name>
        <dbReference type="ChEBI" id="CHEBI:57457"/>
    </ligand>
</feature>
<feature type="binding site" evidence="1">
    <location>
        <begin position="226"/>
        <end position="231"/>
    </location>
    <ligand>
        <name>GTP</name>
        <dbReference type="ChEBI" id="CHEBI:37565"/>
    </ligand>
</feature>
<feature type="binding site" evidence="1">
    <location>
        <position position="230"/>
    </location>
    <ligand>
        <name>Mg(2+)</name>
        <dbReference type="ChEBI" id="CHEBI:18420"/>
    </ligand>
</feature>
<feature type="binding site" evidence="1">
    <location>
        <begin position="245"/>
        <end position="251"/>
    </location>
    <ligand>
        <name>GTP</name>
        <dbReference type="ChEBI" id="CHEBI:37565"/>
    </ligand>
</feature>
<feature type="binding site" evidence="1">
    <location>
        <position position="251"/>
    </location>
    <ligand>
        <name>Mg(2+)</name>
        <dbReference type="ChEBI" id="CHEBI:18420"/>
    </ligand>
</feature>
<feature type="binding site" evidence="1">
    <location>
        <begin position="270"/>
        <end position="273"/>
    </location>
    <ligand>
        <name>GTP</name>
        <dbReference type="ChEBI" id="CHEBI:37565"/>
    </ligand>
</feature>
<feature type="binding site" evidence="1">
    <location>
        <position position="452"/>
    </location>
    <ligand>
        <name>(6S)-5-formyl-5,6,7,8-tetrahydrofolate</name>
        <dbReference type="ChEBI" id="CHEBI:57457"/>
    </ligand>
</feature>
<organism>
    <name type="scientific">Opitutus terrae (strain DSM 11246 / JCM 15787 / PB90-1)</name>
    <dbReference type="NCBI Taxonomy" id="452637"/>
    <lineage>
        <taxon>Bacteria</taxon>
        <taxon>Pseudomonadati</taxon>
        <taxon>Verrucomicrobiota</taxon>
        <taxon>Opitutia</taxon>
        <taxon>Opitutales</taxon>
        <taxon>Opitutaceae</taxon>
        <taxon>Opitutus</taxon>
    </lineage>
</organism>